<dbReference type="EMBL" id="L01788">
    <property type="status" value="NOT_ANNOTATED_CDS"/>
    <property type="molecule type" value="Genomic_RNA"/>
</dbReference>
<dbReference type="EMBL" id="L05435">
    <property type="protein sequence ID" value="AAA42188.1"/>
    <property type="molecule type" value="mRNA"/>
</dbReference>
<dbReference type="EMBL" id="BC092132">
    <property type="protein sequence ID" value="AAH92132.1"/>
    <property type="molecule type" value="mRNA"/>
</dbReference>
<dbReference type="PIR" id="A43344">
    <property type="entry name" value="A43344"/>
</dbReference>
<dbReference type="RefSeq" id="NP_476558.2">
    <property type="nucleotide sequence ID" value="NM_057210.3"/>
</dbReference>
<dbReference type="RefSeq" id="XP_006233014.1">
    <property type="nucleotide sequence ID" value="XM_006232952.3"/>
</dbReference>
<dbReference type="SMR" id="Q02563"/>
<dbReference type="BioGRID" id="250772">
    <property type="interactions" value="2"/>
</dbReference>
<dbReference type="FunCoup" id="Q02563">
    <property type="interactions" value="1648"/>
</dbReference>
<dbReference type="IntAct" id="Q02563">
    <property type="interactions" value="8"/>
</dbReference>
<dbReference type="MINT" id="Q02563"/>
<dbReference type="STRING" id="10116.ENSRNOP00000028760"/>
<dbReference type="BindingDB" id="Q02563"/>
<dbReference type="ChEMBL" id="CHEMBL4381"/>
<dbReference type="DrugCentral" id="Q02563"/>
<dbReference type="GuidetoPHARMACOLOGY" id="2634"/>
<dbReference type="TCDB" id="2.A.1.22.1">
    <property type="family name" value="the major facilitator superfamily (mfs)"/>
</dbReference>
<dbReference type="GlyCosmos" id="Q02563">
    <property type="glycosylation" value="3 sites, 5 glycans"/>
</dbReference>
<dbReference type="GlyGen" id="Q02563">
    <property type="glycosylation" value="3 sites, 5 N-linked glycans (1 site)"/>
</dbReference>
<dbReference type="iPTMnet" id="Q02563"/>
<dbReference type="PhosphoSitePlus" id="Q02563"/>
<dbReference type="SwissPalm" id="Q02563"/>
<dbReference type="jPOST" id="Q02563"/>
<dbReference type="PaxDb" id="10116-ENSRNOP00000028760"/>
<dbReference type="Ensembl" id="ENSRNOT00000028760.5">
    <property type="protein sequence ID" value="ENSRNOP00000028760.2"/>
    <property type="gene ID" value="ENSRNOG00000021182.6"/>
</dbReference>
<dbReference type="GeneID" id="117559"/>
<dbReference type="KEGG" id="rno:117559"/>
<dbReference type="UCSC" id="RGD:619715">
    <property type="organism name" value="rat"/>
</dbReference>
<dbReference type="AGR" id="RGD:619715"/>
<dbReference type="CTD" id="9900"/>
<dbReference type="RGD" id="619715">
    <property type="gene designation" value="Sv2a"/>
</dbReference>
<dbReference type="eggNOG" id="KOG0255">
    <property type="taxonomic scope" value="Eukaryota"/>
</dbReference>
<dbReference type="GeneTree" id="ENSGT00950000182940"/>
<dbReference type="HOGENOM" id="CLU_001265_46_15_1"/>
<dbReference type="InParanoid" id="Q02563"/>
<dbReference type="OMA" id="NDKSMVF"/>
<dbReference type="OrthoDB" id="433512at2759"/>
<dbReference type="PhylomeDB" id="Q02563"/>
<dbReference type="TreeFam" id="TF324824"/>
<dbReference type="PRO" id="PR:Q02563"/>
<dbReference type="Proteomes" id="UP000002494">
    <property type="component" value="Chromosome 2"/>
</dbReference>
<dbReference type="Bgee" id="ENSRNOG00000021182">
    <property type="expression patterns" value="Expressed in frontal cortex and 17 other cell types or tissues"/>
</dbReference>
<dbReference type="GO" id="GO:0005911">
    <property type="term" value="C:cell-cell junction"/>
    <property type="evidence" value="ECO:0000266"/>
    <property type="project" value="RGD"/>
</dbReference>
<dbReference type="GO" id="GO:0030425">
    <property type="term" value="C:dendrite"/>
    <property type="evidence" value="ECO:0000314"/>
    <property type="project" value="RGD"/>
</dbReference>
<dbReference type="GO" id="GO:0098982">
    <property type="term" value="C:GABA-ergic synapse"/>
    <property type="evidence" value="ECO:0000266"/>
    <property type="project" value="RGD"/>
</dbReference>
<dbReference type="GO" id="GO:0098978">
    <property type="term" value="C:glutamatergic synapse"/>
    <property type="evidence" value="ECO:0000266"/>
    <property type="project" value="RGD"/>
</dbReference>
<dbReference type="GO" id="GO:0031594">
    <property type="term" value="C:neuromuscular junction"/>
    <property type="evidence" value="ECO:0000266"/>
    <property type="project" value="RGD"/>
</dbReference>
<dbReference type="GO" id="GO:0043005">
    <property type="term" value="C:neuron projection"/>
    <property type="evidence" value="ECO:0000266"/>
    <property type="project" value="RGD"/>
</dbReference>
<dbReference type="GO" id="GO:0043025">
    <property type="term" value="C:neuronal cell body"/>
    <property type="evidence" value="ECO:0000314"/>
    <property type="project" value="RGD"/>
</dbReference>
<dbReference type="GO" id="GO:0048786">
    <property type="term" value="C:presynaptic active zone"/>
    <property type="evidence" value="ECO:0000314"/>
    <property type="project" value="UniProtKB"/>
</dbReference>
<dbReference type="GO" id="GO:0045202">
    <property type="term" value="C:synapse"/>
    <property type="evidence" value="ECO:0000314"/>
    <property type="project" value="MGI"/>
</dbReference>
<dbReference type="GO" id="GO:0008021">
    <property type="term" value="C:synaptic vesicle"/>
    <property type="evidence" value="ECO:0000266"/>
    <property type="project" value="RGD"/>
</dbReference>
<dbReference type="GO" id="GO:0030672">
    <property type="term" value="C:synaptic vesicle membrane"/>
    <property type="evidence" value="ECO:0000314"/>
    <property type="project" value="RGD"/>
</dbReference>
<dbReference type="GO" id="GO:0043195">
    <property type="term" value="C:terminal bouton"/>
    <property type="evidence" value="ECO:0007005"/>
    <property type="project" value="ParkinsonsUK-UCL"/>
</dbReference>
<dbReference type="GO" id="GO:0019901">
    <property type="term" value="F:protein kinase binding"/>
    <property type="evidence" value="ECO:0000266"/>
    <property type="project" value="RGD"/>
</dbReference>
<dbReference type="GO" id="GO:0022857">
    <property type="term" value="F:transmembrane transporter activity"/>
    <property type="evidence" value="ECO:0007669"/>
    <property type="project" value="InterPro"/>
</dbReference>
<dbReference type="GO" id="GO:0006874">
    <property type="term" value="P:intracellular calcium ion homeostasis"/>
    <property type="evidence" value="ECO:0000266"/>
    <property type="project" value="RGD"/>
</dbReference>
<dbReference type="GO" id="GO:0006836">
    <property type="term" value="P:neurotransmitter transport"/>
    <property type="evidence" value="ECO:0000304"/>
    <property type="project" value="RGD"/>
</dbReference>
<dbReference type="GO" id="GO:0014052">
    <property type="term" value="P:regulation of gamma-aminobutyric acid secretion"/>
    <property type="evidence" value="ECO:0000315"/>
    <property type="project" value="RGD"/>
</dbReference>
<dbReference type="GO" id="GO:0016082">
    <property type="term" value="P:synaptic vesicle priming"/>
    <property type="evidence" value="ECO:0000266"/>
    <property type="project" value="RGD"/>
</dbReference>
<dbReference type="CDD" id="cd17439">
    <property type="entry name" value="MFS_SV2A"/>
    <property type="match status" value="1"/>
</dbReference>
<dbReference type="FunFam" id="1.20.1250.20:FF:000009">
    <property type="entry name" value="Synaptic vesicle glycoprotein 2A"/>
    <property type="match status" value="1"/>
</dbReference>
<dbReference type="FunFam" id="2.160.20.80:FF:000001">
    <property type="entry name" value="Synaptic vesicle glycoprotein 2A"/>
    <property type="match status" value="1"/>
</dbReference>
<dbReference type="FunFam" id="1.20.1250.20:FF:000014">
    <property type="entry name" value="synaptic vesicle glycoprotein 2A"/>
    <property type="match status" value="1"/>
</dbReference>
<dbReference type="Gene3D" id="2.160.20.80">
    <property type="entry name" value="E3 ubiquitin-protein ligase SopA"/>
    <property type="match status" value="1"/>
</dbReference>
<dbReference type="Gene3D" id="1.20.1250.20">
    <property type="entry name" value="MFS general substrate transporter like domains"/>
    <property type="match status" value="2"/>
</dbReference>
<dbReference type="InterPro" id="IPR055415">
    <property type="entry name" value="LD_SV2"/>
</dbReference>
<dbReference type="InterPro" id="IPR011701">
    <property type="entry name" value="MFS"/>
</dbReference>
<dbReference type="InterPro" id="IPR020846">
    <property type="entry name" value="MFS_dom"/>
</dbReference>
<dbReference type="InterPro" id="IPR005828">
    <property type="entry name" value="MFS_sugar_transport-like"/>
</dbReference>
<dbReference type="InterPro" id="IPR036259">
    <property type="entry name" value="MFS_trans_sf"/>
</dbReference>
<dbReference type="InterPro" id="IPR005829">
    <property type="entry name" value="Sugar_transporter_CS"/>
</dbReference>
<dbReference type="InterPro" id="IPR022308">
    <property type="entry name" value="SV2"/>
</dbReference>
<dbReference type="NCBIfam" id="TIGR01299">
    <property type="entry name" value="synapt_SV2"/>
    <property type="match status" value="1"/>
</dbReference>
<dbReference type="PANTHER" id="PTHR23511">
    <property type="entry name" value="SYNAPTIC VESICLE GLYCOPROTEIN 2"/>
    <property type="match status" value="1"/>
</dbReference>
<dbReference type="PANTHER" id="PTHR23511:SF11">
    <property type="entry name" value="SYNAPTIC VESICLE GLYCOPROTEIN 2A"/>
    <property type="match status" value="1"/>
</dbReference>
<dbReference type="Pfam" id="PF23894">
    <property type="entry name" value="LD_SV2"/>
    <property type="match status" value="1"/>
</dbReference>
<dbReference type="Pfam" id="PF07690">
    <property type="entry name" value="MFS_1"/>
    <property type="match status" value="1"/>
</dbReference>
<dbReference type="Pfam" id="PF00083">
    <property type="entry name" value="Sugar_tr"/>
    <property type="match status" value="1"/>
</dbReference>
<dbReference type="SUPFAM" id="SSF103473">
    <property type="entry name" value="MFS general substrate transporter"/>
    <property type="match status" value="2"/>
</dbReference>
<dbReference type="SUPFAM" id="SSF141571">
    <property type="entry name" value="Pentapeptide repeat-like"/>
    <property type="match status" value="1"/>
</dbReference>
<dbReference type="PROSITE" id="PS50850">
    <property type="entry name" value="MFS"/>
    <property type="match status" value="1"/>
</dbReference>
<organism>
    <name type="scientific">Rattus norvegicus</name>
    <name type="common">Rat</name>
    <dbReference type="NCBI Taxonomy" id="10116"/>
    <lineage>
        <taxon>Eukaryota</taxon>
        <taxon>Metazoa</taxon>
        <taxon>Chordata</taxon>
        <taxon>Craniata</taxon>
        <taxon>Vertebrata</taxon>
        <taxon>Euteleostomi</taxon>
        <taxon>Mammalia</taxon>
        <taxon>Eutheria</taxon>
        <taxon>Euarchontoglires</taxon>
        <taxon>Glires</taxon>
        <taxon>Rodentia</taxon>
        <taxon>Myomorpha</taxon>
        <taxon>Muroidea</taxon>
        <taxon>Muridae</taxon>
        <taxon>Murinae</taxon>
        <taxon>Rattus</taxon>
    </lineage>
</organism>
<comment type="function">
    <text>Plays a role in the control of regulated secretion in neural and endocrine cells, enhancing selectively low-frequency neurotransmission. Positively regulates vesicle fusion by maintaining the readily releasable pool of secretory vesicles.</text>
</comment>
<comment type="function">
    <text evidence="12 13 15 18">(Microbial infection) Receptor for C.botulinum neurotoxin type A (BoNT/A, botA); the toxin binds via extracellular loop 4 (PubMed:16543415). Restores uptake of BoNT/A in mouse cells that are deleted for SV2 receptor (PubMed:16543415, PubMed:18815274). Glycosylation of Asn-573 is not essential for receptor activity, but enhances uptake (PubMed:18815274, PubMed:19650874). Also serves as a receptor for the closely related C.botulinum neurotoxin type A2; glycosylation is not essential but enhances the interaction (PubMed:29649119).</text>
</comment>
<comment type="function">
    <text evidence="16 17">Possible receptor for C.botulinum neurotoxin type D (BoNT/D, botD); BoNT/D does not bind to extracellular loop 4 as do BoNT/A and BoNT/E, nor to loop 1 or loop 3 (PubMed:21483489). Another group does not find a convincing interaction with SV2 (PubMed:21632541).</text>
</comment>
<comment type="function">
    <text evidence="13 15">(Microbial infection) Receptor for C.botulinum neurotoxin type E (BoNT/E); the toxin probably binds via extracellular loop 4 and requires glycosylation of Asn-573 (PubMed:18815274, PubMed:19650874). Restores uptake of BoNT/E in mouse cells that are deleted for SV2 receptor (PubMed:18815274).</text>
</comment>
<comment type="function">
    <text evidence="15 23">(Microbial infection) Receptor for C.botulinum neurotoxin type F (BoNT/F) (PubMed:19476346, PubMed:19650874). Binding requires glycosylation of Asn-573 (PubMed:19476346).</text>
</comment>
<comment type="subunit">
    <text evidence="5 7 10 19">Interacts with SYT1/synaptotagmin-1 in a calcium-dependent manner. Binds the adapter protein complex AP-2.</text>
</comment>
<comment type="subunit">
    <text evidence="12 15 16 17 18">(Microbial infection) Interacts with C.botulinum neurotoxin type A1 and type A2 (BoNT/A, botA) (PubMed:16543415, PubMed:19650874, PubMed:21483489, PubMed:21632541, PubMed:29649119). Interaction is improved by glycosylation of SV2 (PubMed:29649119).</text>
</comment>
<comment type="subunit">
    <text evidence="14 15">(Microbial infection) Copurifies with C.botulinum neurotoxin type B (BoNT/B, botB) and synaptotagmin 1 (SYT1) (PubMed:19476346). Interaction does not require glycosylation of SV2 or SYT1 proteins (PubMed:19476346). Another group finds only copurification with SYT1 and SYT2 (PubMed:19650874).</text>
</comment>
<comment type="subunit">
    <text evidence="13 14 15">(Microbial infection) Interacts with C.botulinum neurotoxin type E (BoNT/E) (PubMed:18815274, PubMed:19476346, PubMed:19650874). Interaction requires glycosylation of SV2 proteins (PubMed:18815274, PubMed:19476346, PubMed:19650874).</text>
</comment>
<comment type="subunit">
    <text evidence="14 15">(Microbial infection) Copurifies with C.botulinum neurotoxin type F (BoNT/F) and synaptotagmin 1 (SYT2) (PubMed:19476346). Another group finds only copurification with BoNT/F (PubMed:19650874). Interaction requires SV2 glycosylation (PubMed:19476346).</text>
</comment>
<comment type="interaction">
    <interactant intactId="EBI-466194">
        <id>Q02563</id>
    </interactant>
    <interactant intactId="EBI-458098">
        <id>P21707</id>
        <label>Syt1</label>
    </interactant>
    <organismsDiffer>false</organismsDiffer>
    <experiments>2</experiments>
</comment>
<comment type="interaction">
    <interactant intactId="EBI-466194">
        <id>Q02563</id>
    </interactant>
    <interactant intactId="EBI-81694">
        <id>O00213</id>
        <label>APBB1</label>
    </interactant>
    <organismsDiffer>true</organismsDiffer>
    <experiments>3</experiments>
</comment>
<comment type="interaction">
    <interactant intactId="EBI-466194">
        <id>Q02563</id>
    </interactant>
    <interactant intactId="EBI-8178893">
        <id>P0DPI0</id>
        <label>botA</label>
    </interactant>
    <organismsDiffer>true</organismsDiffer>
    <experiments>2</experiments>
</comment>
<comment type="subcellular location">
    <subcellularLocation>
        <location evidence="2">Presynapse</location>
    </subcellularLocation>
    <subcellularLocation>
        <location evidence="6 9 11">Cytoplasmic vesicle</location>
        <location evidence="6 9 11">Secretory vesicle</location>
        <location evidence="6 9 11">Synaptic vesicle membrane</location>
        <topology evidence="6 9 11">Multi-pass membrane protein</topology>
    </subcellularLocation>
    <text evidence="2 6 11">Enriched in chromaffin granules, not present in adrenal microsomes. Associated with both insulin granules and synaptic-like microvesicles in insulin-secreting cells of the pancreas. Colocalizes with ATP2B1 at photoreceptor synaptic terminals.</text>
</comment>
<comment type="tissue specificity">
    <text evidence="9">Widely expressed throughout the brain (at protein level). Expressed by neural and endocrine cells of brain and spinal cord.</text>
</comment>
<comment type="PTM">
    <text evidence="7">Phosphorylation by CK1 of the N-terminal cytoplasmic domain regulates interaction with SYT1.</text>
</comment>
<comment type="PTM">
    <text evidence="8 22 23 25">N-glycosylated, on at least 3 residues.</text>
</comment>
<comment type="disruption phenotype">
    <text evidence="12">Short hairpin-mediated RNA knockdown of the protein in PC12 cells leads to increased resistance to C.botulinum neurotoxin type A (BoNT/A, botA) as assayed by reduced SNAP25 cleavage; uptake and degradation are restored by expression of SV2B or SV2C (PubMed:16543415).</text>
</comment>
<comment type="miscellaneous">
    <text>Identified as the brain binding-site for the antiepileptic drug levetiracetam/lev.</text>
</comment>
<comment type="similarity">
    <text evidence="20">Belongs to the major facilitator superfamily.</text>
</comment>
<comment type="caution">
    <text evidence="16 17">The use of this protein as a coreceptor for C.botulinum type D (BoNT/D, botD) is controversial. In double SV2A/SV2B knockout mice BoNT/D does not degrade its synaptobrevin target; introducing SV2A, SV2B or SV2C restores target cleavage (PubMed:21483489). However another group does not find a convincing interaction with SV2 (PubMed:21632541).</text>
</comment>
<protein>
    <recommendedName>
        <fullName>Synaptic vesicle glycoprotein 2A</fullName>
        <shortName>Synaptic vesicle protein 2</shortName>
        <shortName>Synaptic vesicle protein 2A</shortName>
    </recommendedName>
</protein>
<sequence>MEEGFRDRAAFIRGAKDIAKEVKKHAAKKVVKGLDRVQDEYSRRSYSRFEEEEDDDDFPAPADGYYRGEGAQDEEEGGASSDATEGHDEDDEIYEGEYQGIPRAESGGKGERMADGAPLAGVRGGLSDGEGPPGGRGEAQRRKDREELAQQYETILRECGHGRFQWTLYFVLGLALMADGVEVFVVGFVLPSAEKDMCLSDSNKGMLGLIVYLGMMVGAFLWGGLADRLGRRQCLLISLSVNSVFAFFSSFVQGYGTFLFCRLLSGVGIGGSIPIVFSYFSEFLAQEKRGEHLSWLCMFWMIGGVYAAAMAWAIIPHYGWSFQMGSAYQFHSWRVFVLVCAFPSVFAIGALTTQPESPRFFLENGKHDEAWMVLKQVHDTNMRAKGHPERVFSVTHIKTIHQEDELIEIQSDTGTWYQRWGVRALSLGGQVWGNFLSCFSPEYRRITLMMMGVWFTMSFSYYGLTVWFPDMIRHLQAVDYAARTKVFPGERVEHVTFNFTLENQIHRGGQYFNDKFIGLRLKSVSFEDSLFEECYFEDVTSSNTFFRNCTFINTVFYNTDLFEYKFVNSRLVNSTFLHNKEGCPLDVTGTGEGAYMVYFVSFLGTLAVLPGNIVSALLMDKIGRLRMLAGSSVLSCVSCFFLSFGNSESAMIALLCLFGGVSIASWNALDVLTVELYPSDKRTTAFGFLNALCKLAAVLGISIFTSFVGITKAAPILFASAALALGSSLALKLPETRGQVLQ</sequence>
<name>SV2A_RAT</name>
<gene>
    <name type="primary">Sv2a</name>
    <name type="synonym">Sv2</name>
</gene>
<accession>Q02563</accession>
<accession>Q58DZ8</accession>
<reference key="1">
    <citation type="journal article" date="1992" name="Cell">
        <title>The synaptic vesicle protein SV2 is a novel type of transmembrane transporter.</title>
        <authorList>
            <person name="Feany M.B."/>
            <person name="Lee S."/>
            <person name="Edwards R.H."/>
            <person name="Buckley K.M."/>
        </authorList>
    </citation>
    <scope>NUCLEOTIDE SEQUENCE [GENOMIC RNA]</scope>
    <scope>GLYCOSYLATION</scope>
</reference>
<reference key="2">
    <citation type="journal article" date="1992" name="FEBS Lett.">
        <title>Identification, characterization, and molecular cloning of a novel transporter-like protein localized to the central nervous system.</title>
        <authorList>
            <person name="Gingrich J.A."/>
            <person name="Andersen P.H."/>
            <person name="Tiberi M."/>
            <person name="el Mestikawy S."/>
            <person name="Jorgensen P.N."/>
            <person name="Fremeau R.T. Jr."/>
            <person name="Caron M.G."/>
        </authorList>
    </citation>
    <scope>NUCLEOTIDE SEQUENCE [MRNA]</scope>
    <scope>PROTEIN SEQUENCE OF 177-194 AND 372-381</scope>
    <scope>TISSUE SPECIFICITY</scope>
    <scope>SUBCELLULAR LOCATION</scope>
</reference>
<reference key="3">
    <citation type="journal article" date="1992" name="Science">
        <title>SV2, a brain synaptic vesicle protein homologous to bacterial transporters.</title>
        <authorList>
            <person name="Bajjalieh S.M."/>
            <person name="Peterson K."/>
            <person name="Shingal R."/>
            <person name="Scheller R.H."/>
        </authorList>
    </citation>
    <scope>NUCLEOTIDE SEQUENCE [MRNA]</scope>
    <scope>PROTEIN SEQUENCE OF 1-40</scope>
    <source>
        <tissue>Brain</tissue>
    </source>
</reference>
<reference key="4">
    <citation type="journal article" date="2004" name="Genome Res.">
        <title>The status, quality, and expansion of the NIH full-length cDNA project: the Mammalian Gene Collection (MGC).</title>
        <authorList>
            <consortium name="The MGC Project Team"/>
        </authorList>
    </citation>
    <scope>NUCLEOTIDE SEQUENCE [LARGE SCALE MRNA]</scope>
    <source>
        <tissue>Brain</tissue>
    </source>
</reference>
<reference key="5">
    <citation type="journal article" date="1996" name="J. Biol. Chem.">
        <title>Isoform-specific, calcium-regulated interaction of the synaptic vesicle proteins SV2 and synaptotagmin.</title>
        <authorList>
            <person name="Schivell A.E."/>
            <person name="Batchelor R.H."/>
            <person name="Bajjalieh S.M."/>
        </authorList>
    </citation>
    <scope>INTERACTION WITH SYT1</scope>
</reference>
<reference key="6">
    <citation type="journal article" date="1999" name="Neuroscience">
        <title>SV2C is a synaptic vesicle protein with an unusually restricted localization: anatomy of a synaptic vesicle protein family.</title>
        <authorList>
            <person name="Janz R."/>
            <person name="Suedhof T.C."/>
        </authorList>
    </citation>
    <scope>SUBCELLULAR LOCATION</scope>
</reference>
<reference key="7">
    <citation type="journal article" date="1999" name="Science">
        <title>AP-2 recruitment to synaptotagmin stimulated by tyrosine-based endocytic motifs.</title>
        <authorList>
            <person name="Haucke V."/>
            <person name="De Camilli P."/>
        </authorList>
    </citation>
    <scope>INTERACTION WITH AP-2</scope>
</reference>
<reference key="8">
    <citation type="journal article" date="2000" name="J. Biol. Chem.">
        <title>Phosphorylation of synaptic vesicle protein 2 modulates binding to synaptotagmin.</title>
        <authorList>
            <person name="Pyle R.A."/>
            <person name="Schivell A.E."/>
            <person name="Hidaka H."/>
            <person name="Bajjalieh S.M."/>
        </authorList>
    </citation>
    <scope>PHOSPHORYLATION BY CK1</scope>
    <scope>INTERACTION WITH SYT1</scope>
</reference>
<reference key="9">
    <citation type="journal article" date="2004" name="Proc. Natl. Acad. Sci. U.S.A.">
        <title>The synaptic vesicle protein SV2A is the binding site for the antiepileptic drug levetiracetam.</title>
        <authorList>
            <person name="Lynch B.A."/>
            <person name="Lambeng N."/>
            <person name="Nocka K."/>
            <person name="Kensel-Hammes P."/>
            <person name="Bajjalieh S.M."/>
            <person name="Matagne A."/>
            <person name="Fuks B."/>
        </authorList>
    </citation>
    <scope>CHARACTERIZATION AS BINDING-SITE FOR ANTIEPILEPTIC DRUG LEVETIRACETAM</scope>
</reference>
<reference key="10">
    <citation type="journal article" date="2005" name="J. Cell Sci.">
        <title>SV2A and SV2C are not vesicular Ca2+ transporters but control glucose-evoked granule recruitment.</title>
        <authorList>
            <person name="Iezzi M."/>
            <person name="Theander S."/>
            <person name="Janz R."/>
            <person name="Loze C."/>
            <person name="Wollheim C.B."/>
        </authorList>
    </citation>
    <scope>FUNCTION</scope>
    <scope>SUBCELLULAR LOCATION</scope>
</reference>
<reference key="11">
    <citation type="journal article" date="2005" name="Mol. Cell. Neurosci.">
        <title>SV2A and SV2C contain a unique synaptotagmin-binding site.</title>
        <authorList>
            <person name="Schivell A.E."/>
            <person name="Mochida S."/>
            <person name="Kensel-Hammes P."/>
            <person name="Custer K.L."/>
            <person name="Bajjalieh S.M."/>
        </authorList>
    </citation>
    <scope>FUNCTION</scope>
    <scope>INTERACTION WITH SYT1</scope>
</reference>
<reference key="12">
    <citation type="journal article" date="2006" name="Science">
        <title>SV2 is the protein receptor for botulinum neurotoxin A.</title>
        <authorList>
            <person name="Dong M."/>
            <person name="Yeh F."/>
            <person name="Tepp W.H."/>
            <person name="Dean C."/>
            <person name="Johnson E.A."/>
            <person name="Janz R."/>
            <person name="Chapman E.R."/>
        </authorList>
    </citation>
    <scope>FUNCTION AS C.BOTULINUM NEUROTOXIN TYPE A RECEPTOR (MICROBIAL INFECTION)</scope>
    <scope>SUBUNIT (MICROBIAL INFECTION)</scope>
    <scope>DISRUPTION PHENOTYPE</scope>
</reference>
<reference key="13">
    <citation type="journal article" date="2008" name="Mol. Biol. Cell">
        <title>Glycosylated SV2A and SV2B mediate the entry of botulinum neurotoxin E into neurons.</title>
        <authorList>
            <person name="Dong M."/>
            <person name="Liu H."/>
            <person name="Tepp W.H."/>
            <person name="Johnson E.A."/>
            <person name="Janz R."/>
            <person name="Chapman E.R."/>
        </authorList>
    </citation>
    <scope>FUNCTION AS C.BOTULINUM NEUROTOXIN TYPES A AND E RECEPTOR (MICROBIAL INFECTION)</scope>
    <scope>SUBUNIT (MICROBIAL INFECTION)</scope>
    <scope>GLYCOSYLATION AT ASN-498; ASN-548 AND ASN-573</scope>
    <scope>MUTAGENESIS OF ASN-498; ASN-548; 570-ARG--ASN-573 AND ASN-573</scope>
</reference>
<reference key="14">
    <citation type="journal article" date="2009" name="Biochemistry">
        <title>Glycosylated SV2 and gangliosides as dual receptors for botulinum neurotoxin serotype F.</title>
        <authorList>
            <person name="Fu Z."/>
            <person name="Chen C."/>
            <person name="Barbieri J.T."/>
            <person name="Kim J.J."/>
            <person name="Baldwin M.R."/>
        </authorList>
    </citation>
    <scope>FUNCTION AS C.BOTULINUM NEUROTOXIN TYPE F RECEPTOR (MICROBIAL INFECTION)</scope>
    <scope>SUBUNIT (MICROBIAL INFECTION)</scope>
    <scope>GLYCOSYLATION</scope>
</reference>
<reference key="15">
    <citation type="journal article" date="2009" name="J. Neurochem.">
        <title>Botulinum neurotoxins C, E and F bind gangliosides via a conserved binding site prior to stimulation-dependent uptake with botulinum neurotoxin F utilising the three isoforms of SV2 as second receptor.</title>
        <authorList>
            <person name="Rummel A."/>
            <person name="Haefner K."/>
            <person name="Mahrhold S."/>
            <person name="Darashchonak N."/>
            <person name="Holt M."/>
            <person name="Jahn R."/>
            <person name="Beermann S."/>
            <person name="Karnath T."/>
            <person name="Bigalke H."/>
            <person name="Binz T."/>
        </authorList>
    </citation>
    <scope>FUNCTION AS C.BOTULINUM NEUROTOXIN TYPES A; E AND F RECEPTOR (MICROBIAL INFECTION)</scope>
    <scope>SUBUNIT (MICROBIAL INFECTION)</scope>
</reference>
<reference key="16">
    <citation type="journal article" date="2011" name="PLoS Pathog.">
        <title>Botulinum neurotoxin D uses synaptic vesicle protein SV2 and gangliosides as receptors.</title>
        <authorList>
            <person name="Peng L."/>
            <person name="Tepp W.H."/>
            <person name="Johnson E.A."/>
            <person name="Dong M."/>
        </authorList>
    </citation>
    <scope>POSSIBLE FUNCTION AS C.BOTULINUM NEUROTOXIN TYPE D RECEPTOR (MICROBIAL INFECTION)</scope>
    <scope>MUTAGENESIS OF 196-ASP--SER-200; 321-SER--HIS-331; ASN-498; ASN-548 AND ASN-573</scope>
</reference>
<reference key="17">
    <citation type="journal article" date="2011" name="J. Biol. Chem.">
        <title>Novel ganglioside-mediated entry of botulinum neurotoxin serotype D into neurons.</title>
        <authorList>
            <person name="Kroken A.R."/>
            <person name="Karalewitz A.P."/>
            <person name="Fu Z."/>
            <person name="Kim J.J."/>
            <person name="Barbieri J.T."/>
        </authorList>
    </citation>
    <scope>NOT RECEPTOR FOR C.BOTULINUM NEUROTOXIN TYPE D (MICROBIAL INFECTION)</scope>
    <scope>SUBUNIT (MICROBIAL INFECTION)</scope>
</reference>
<reference key="18">
    <citation type="journal article" date="2012" name="Nat. Commun.">
        <title>Quantitative maps of protein phosphorylation sites across 14 different rat organs and tissues.</title>
        <authorList>
            <person name="Lundby A."/>
            <person name="Secher A."/>
            <person name="Lage K."/>
            <person name="Nordsborg N.B."/>
            <person name="Dmytriyev A."/>
            <person name="Lundby C."/>
            <person name="Olsen J.V."/>
        </authorList>
    </citation>
    <scope>PHOSPHORYLATION [LARGE SCALE ANALYSIS] AT SER-127 AND SER-393</scope>
    <scope>IDENTIFICATION BY MASS SPECTROMETRY [LARGE SCALE ANALYSIS]</scope>
</reference>
<reference key="19">
    <citation type="journal article" date="2013" name="J. Proteome Res.">
        <title>Site-specific glycan-peptide analysis for determination of N-glycoproteome heterogeneity.</title>
        <authorList>
            <person name="Parker B.L."/>
            <person name="Thaysen-Andersen M."/>
            <person name="Solis N."/>
            <person name="Scott N.E."/>
            <person name="Larsen M.R."/>
            <person name="Graham M.E."/>
            <person name="Packer N.H."/>
            <person name="Cordwell S.J."/>
        </authorList>
    </citation>
    <scope>GLYCOSYLATION [LARGE SCALE ANALYSIS] AT ASN-573</scope>
    <scope>IDENTIFICATION BY MASS SPECTROMETRY [LARGE SCALE ANALYSIS]</scope>
    <source>
        <tissue>Brain</tissue>
    </source>
</reference>
<reference key="20">
    <citation type="journal article" date="2018" name="Toxins">
        <title>Crystal structure of botulinum neurotoxin A2 in complex with the human protein receptor SV2C reveals plasticity in receptor binding.</title>
        <authorList>
            <person name="Gustafsson R."/>
            <person name="Zhang S."/>
            <person name="Masuyer G."/>
            <person name="Dong M."/>
            <person name="Stenmark P."/>
        </authorList>
    </citation>
    <scope>FUNCTION AS C.BOTULINUM NEUROTOXIN TYPE A2 RECEPTOR (MICROBIAL INFECTION)</scope>
    <scope>SUBUNIT (MICROBIAL INFECTION)</scope>
    <scope>GLYCOSYLATION</scope>
</reference>
<keyword id="KW-0966">Cell projection</keyword>
<keyword id="KW-0968">Cytoplasmic vesicle</keyword>
<keyword id="KW-0903">Direct protein sequencing</keyword>
<keyword id="KW-0325">Glycoprotein</keyword>
<keyword id="KW-0472">Membrane</keyword>
<keyword id="KW-0532">Neurotransmitter transport</keyword>
<keyword id="KW-0597">Phosphoprotein</keyword>
<keyword id="KW-0675">Receptor</keyword>
<keyword id="KW-1185">Reference proteome</keyword>
<keyword id="KW-0770">Synapse</keyword>
<keyword id="KW-0812">Transmembrane</keyword>
<keyword id="KW-1133">Transmembrane helix</keyword>
<keyword id="KW-0813">Transport</keyword>
<evidence type="ECO:0000250" key="1">
    <source>
        <dbReference type="UniProtKB" id="Q7L0J3"/>
    </source>
</evidence>
<evidence type="ECO:0000250" key="2">
    <source>
        <dbReference type="UniProtKB" id="Q9JIS5"/>
    </source>
</evidence>
<evidence type="ECO:0000255" key="3"/>
<evidence type="ECO:0000256" key="4">
    <source>
        <dbReference type="SAM" id="MobiDB-lite"/>
    </source>
</evidence>
<evidence type="ECO:0000269" key="5">
    <source>
    </source>
</evidence>
<evidence type="ECO:0000269" key="6">
    <source>
    </source>
</evidence>
<evidence type="ECO:0000269" key="7">
    <source>
    </source>
</evidence>
<evidence type="ECO:0000269" key="8">
    <source>
    </source>
</evidence>
<evidence type="ECO:0000269" key="9">
    <source>
    </source>
</evidence>
<evidence type="ECO:0000269" key="10">
    <source>
    </source>
</evidence>
<evidence type="ECO:0000269" key="11">
    <source>
    </source>
</evidence>
<evidence type="ECO:0000269" key="12">
    <source>
    </source>
</evidence>
<evidence type="ECO:0000269" key="13">
    <source>
    </source>
</evidence>
<evidence type="ECO:0000269" key="14">
    <source>
    </source>
</evidence>
<evidence type="ECO:0000269" key="15">
    <source>
    </source>
</evidence>
<evidence type="ECO:0000269" key="16">
    <source>
    </source>
</evidence>
<evidence type="ECO:0000269" key="17">
    <source>
    </source>
</evidence>
<evidence type="ECO:0000269" key="18">
    <source>
    </source>
</evidence>
<evidence type="ECO:0000269" key="19">
    <source>
    </source>
</evidence>
<evidence type="ECO:0000305" key="20"/>
<evidence type="ECO:0000305" key="21">
    <source>
    </source>
</evidence>
<evidence type="ECO:0000305" key="22">
    <source>
    </source>
</evidence>
<evidence type="ECO:0000305" key="23">
    <source>
    </source>
</evidence>
<evidence type="ECO:0000305" key="24">
    <source>
    </source>
</evidence>
<evidence type="ECO:0000305" key="25">
    <source>
    </source>
</evidence>
<evidence type="ECO:0007744" key="26">
    <source>
    </source>
</evidence>
<evidence type="ECO:0007744" key="27">
    <source>
    </source>
</evidence>
<feature type="chain" id="PRO_0000084882" description="Synaptic vesicle glycoprotein 2A">
    <location>
        <begin position="1"/>
        <end position="742"/>
    </location>
</feature>
<feature type="topological domain" description="Cytoplasmic" evidence="3">
    <location>
        <begin position="1"/>
        <end position="169"/>
    </location>
</feature>
<feature type="transmembrane region" description="Helical" evidence="3">
    <location>
        <begin position="170"/>
        <end position="190"/>
    </location>
</feature>
<feature type="topological domain" description="Extracellular" evidence="3 24">
    <location>
        <begin position="191"/>
        <end position="205"/>
    </location>
</feature>
<feature type="transmembrane region" description="Helical" evidence="3">
    <location>
        <begin position="206"/>
        <end position="226"/>
    </location>
</feature>
<feature type="topological domain" description="Cytoplasmic" evidence="3">
    <location>
        <begin position="227"/>
        <end position="233"/>
    </location>
</feature>
<feature type="transmembrane region" description="Helical" evidence="3">
    <location>
        <begin position="234"/>
        <end position="254"/>
    </location>
</feature>
<feature type="topological domain" description="Extracellular" evidence="3">
    <location>
        <begin position="255"/>
        <end position="262"/>
    </location>
</feature>
<feature type="transmembrane region" description="Helical" evidence="3">
    <location>
        <begin position="263"/>
        <end position="283"/>
    </location>
</feature>
<feature type="topological domain" description="Cytoplasmic" evidence="3">
    <location>
        <begin position="284"/>
        <end position="294"/>
    </location>
</feature>
<feature type="transmembrane region" description="Helical" evidence="3">
    <location>
        <begin position="295"/>
        <end position="315"/>
    </location>
</feature>
<feature type="topological domain" description="Extracellular" evidence="3 24">
    <location>
        <begin position="316"/>
        <end position="334"/>
    </location>
</feature>
<feature type="transmembrane region" description="Helical" evidence="3">
    <location>
        <begin position="335"/>
        <end position="355"/>
    </location>
</feature>
<feature type="topological domain" description="Cytoplasmic" evidence="3">
    <location>
        <begin position="356"/>
        <end position="447"/>
    </location>
</feature>
<feature type="transmembrane region" description="Helical" evidence="3">
    <location>
        <begin position="448"/>
        <end position="468"/>
    </location>
</feature>
<feature type="topological domain" description="Extracellular" evidence="3 21 22">
    <location>
        <begin position="469"/>
        <end position="598"/>
    </location>
</feature>
<feature type="transmembrane region" description="Helical" evidence="3">
    <location>
        <begin position="599"/>
        <end position="619"/>
    </location>
</feature>
<feature type="topological domain" description="Cytoplasmic" evidence="3">
    <location>
        <begin position="620"/>
        <end position="626"/>
    </location>
</feature>
<feature type="transmembrane region" description="Helical" evidence="3">
    <location>
        <begin position="627"/>
        <end position="647"/>
    </location>
</feature>
<feature type="topological domain" description="Extracellular" evidence="3">
    <location>
        <begin position="648"/>
        <end position="651"/>
    </location>
</feature>
<feature type="transmembrane region" description="Helical" evidence="3">
    <location>
        <begin position="652"/>
        <end position="672"/>
    </location>
</feature>
<feature type="topological domain" description="Cytoplasmic" evidence="3">
    <location>
        <begin position="673"/>
        <end position="685"/>
    </location>
</feature>
<feature type="transmembrane region" description="Helical" evidence="3">
    <location>
        <begin position="686"/>
        <end position="708"/>
    </location>
</feature>
<feature type="topological domain" description="Extracellular" evidence="3">
    <location>
        <begin position="709"/>
        <end position="712"/>
    </location>
</feature>
<feature type="transmembrane region" description="Helical" evidence="3">
    <location>
        <begin position="713"/>
        <end position="731"/>
    </location>
</feature>
<feature type="topological domain" description="Cytoplasmic" evidence="3">
    <location>
        <begin position="732"/>
        <end position="742"/>
    </location>
</feature>
<feature type="region of interest" description="Interaction with SYT1">
    <location>
        <begin position="1"/>
        <end position="57"/>
    </location>
</feature>
<feature type="region of interest" description="Disordered" evidence="4">
    <location>
        <begin position="40"/>
        <end position="145"/>
    </location>
</feature>
<feature type="compositionally biased region" description="Basic and acidic residues" evidence="4">
    <location>
        <begin position="40"/>
        <end position="49"/>
    </location>
</feature>
<feature type="compositionally biased region" description="Gly residues" evidence="4">
    <location>
        <begin position="122"/>
        <end position="137"/>
    </location>
</feature>
<feature type="modified residue" description="Phosphoserine" evidence="1">
    <location>
        <position position="80"/>
    </location>
</feature>
<feature type="modified residue" description="Phosphoserine" evidence="1">
    <location>
        <position position="81"/>
    </location>
</feature>
<feature type="modified residue" description="Phosphothreonine" evidence="1">
    <location>
        <position position="84"/>
    </location>
</feature>
<feature type="modified residue" description="Phosphoserine" evidence="26">
    <location>
        <position position="127"/>
    </location>
</feature>
<feature type="modified residue" description="Phosphoserine" evidence="26">
    <location>
        <position position="393"/>
    </location>
</feature>
<feature type="modified residue" description="Phosphotyrosine" evidence="2">
    <location>
        <position position="480"/>
    </location>
</feature>
<feature type="glycosylation site" description="N-linked (GlcNAc...) asparagine" evidence="3 22">
    <location>
        <position position="498"/>
    </location>
</feature>
<feature type="glycosylation site" description="N-linked (GlcNAc...) asparagine" evidence="3 22">
    <location>
        <position position="548"/>
    </location>
</feature>
<feature type="glycosylation site" description="N-linked (GlcNAc...) asparagine; alternate" evidence="3 22">
    <location>
        <position position="573"/>
    </location>
</feature>
<feature type="glycosylation site" description="N-linked (HexNAc...) asparagine; alternate" evidence="27">
    <location>
        <position position="573"/>
    </location>
</feature>
<feature type="mutagenesis site" description="No change in uptake of C.botulinum neurotoxin type D (BoNT/D, botD) or C.botulinum neurotoxin type E (BoNT/E)." evidence="16">
    <location>
        <begin position="196"/>
        <end position="200"/>
    </location>
</feature>
<feature type="mutagenesis site" description="No change in uptake of BoNT/D or BoNT/E." evidence="16">
    <location>
        <begin position="321"/>
        <end position="331"/>
    </location>
</feature>
<feature type="mutagenesis site" description="No change in uptake of BoNT/E or C.botulinum neurotoxin type A (BoNT/A, botA) by mouse SV2A/SV2B knockout neurons; SV2A apparent molecular weight decreases. No change in uptake of BoNT/E; when associated with Q-548. No change in uptake of BoNT/D." evidence="13 16">
    <original>N</original>
    <variation>Q</variation>
    <location>
        <position position="498"/>
    </location>
</feature>
<feature type="mutagenesis site" description="No change in uptake of BoNT/E or BoNT/A by mouse SV2A/SV2B knockout neurons; SV2A apparent molecular weight decreases. No change in uptake of BoNT/E; when associated with Q-498. No change in uptake of BoNT/D." evidence="13 16">
    <original>N</original>
    <variation>Q</variation>
    <location>
        <position position="548"/>
    </location>
</feature>
<feature type="mutagenesis site" description="Restores apparent molecular weight to wild-type, does not restore uptake of BoNT/E." evidence="13">
    <original>RLVN</original>
    <variation>TLVQ</variation>
    <location>
        <begin position="570"/>
        <end position="573"/>
    </location>
</feature>
<feature type="mutagenesis site" description="BoNT/E not taken up by mouse SV2A/SV2B knockout neurons, decreased uptake of BoNT/A; SV2A apparent molecular weight decreases. No change in uptake of BoNT/D." evidence="13 16">
    <original>N</original>
    <variation>Q</variation>
    <location>
        <position position="573"/>
    </location>
</feature>
<feature type="sequence conflict" description="In Ref. 1; AAA42188." evidence="20" ref="1">
    <original>C</original>
    <variation>F</variation>
    <location>
        <position position="340"/>
    </location>
</feature>
<proteinExistence type="evidence at protein level"/>